<sequence>MTGSVDRPDQNRGERSMKSPGLDLVRRTLDEARAAARARGQDAGRGRVASVASGRVAGRRRSWSGPGPDIRDPQPLGKAARELAKKRGWSVRVAEGMVLGQWSAVVGHQIAEHARPTALNDGVLSVIAESTAWATQLRIMQAQLLAKIAAAVGNDVVRSLKITGPAAPSWRKGPRHIAGRGPRDTYG</sequence>
<protein>
    <recommendedName>
        <fullName>UPF0232 protein MT0004</fullName>
    </recommendedName>
</protein>
<dbReference type="EMBL" id="AE000516">
    <property type="protein sequence ID" value="AAK44227.1"/>
    <property type="molecule type" value="Genomic_DNA"/>
</dbReference>
<dbReference type="PIR" id="B70698">
    <property type="entry name" value="B70698"/>
</dbReference>
<dbReference type="RefSeq" id="WP_003899769.1">
    <property type="nucleotide sequence ID" value="NZ_KK341227.1"/>
</dbReference>
<dbReference type="SMR" id="P9WFL0"/>
<dbReference type="KEGG" id="mtc:MT0004"/>
<dbReference type="PATRIC" id="fig|83331.31.peg.4"/>
<dbReference type="HOGENOM" id="CLU_087206_0_1_11"/>
<dbReference type="Proteomes" id="UP000001020">
    <property type="component" value="Chromosome"/>
</dbReference>
<dbReference type="HAMAP" id="MF_00630">
    <property type="entry name" value="UPF0232"/>
    <property type="match status" value="1"/>
</dbReference>
<dbReference type="InterPro" id="IPR007922">
    <property type="entry name" value="DciA-like"/>
</dbReference>
<dbReference type="InterPro" id="IPR023007">
    <property type="entry name" value="UPF0232_actinobac"/>
</dbReference>
<dbReference type="NCBIfam" id="NF002871">
    <property type="entry name" value="PRK03195.1"/>
    <property type="match status" value="1"/>
</dbReference>
<dbReference type="PANTHER" id="PTHR36456">
    <property type="entry name" value="UPF0232 PROTEIN SCO3875"/>
    <property type="match status" value="1"/>
</dbReference>
<dbReference type="PANTHER" id="PTHR36456:SF1">
    <property type="entry name" value="UPF0232 PROTEIN SCO3875"/>
    <property type="match status" value="1"/>
</dbReference>
<dbReference type="Pfam" id="PF05258">
    <property type="entry name" value="DciA"/>
    <property type="match status" value="1"/>
</dbReference>
<feature type="chain" id="PRO_0000428520" description="UPF0232 protein MT0004">
    <location>
        <begin position="1"/>
        <end position="187"/>
    </location>
</feature>
<feature type="region of interest" description="Disordered" evidence="1">
    <location>
        <begin position="1"/>
        <end position="75"/>
    </location>
</feature>
<feature type="region of interest" description="Disordered" evidence="1">
    <location>
        <begin position="168"/>
        <end position="187"/>
    </location>
</feature>
<feature type="compositionally biased region" description="Basic and acidic residues" evidence="1">
    <location>
        <begin position="1"/>
        <end position="17"/>
    </location>
</feature>
<feature type="compositionally biased region" description="Basic and acidic residues" evidence="1">
    <location>
        <begin position="24"/>
        <end position="45"/>
    </location>
</feature>
<comment type="similarity">
    <text evidence="2">Belongs to the UPF0232 family.</text>
</comment>
<gene>
    <name type="ordered locus">MT0004</name>
</gene>
<keyword id="KW-1185">Reference proteome</keyword>
<organism>
    <name type="scientific">Mycobacterium tuberculosis (strain CDC 1551 / Oshkosh)</name>
    <dbReference type="NCBI Taxonomy" id="83331"/>
    <lineage>
        <taxon>Bacteria</taxon>
        <taxon>Bacillati</taxon>
        <taxon>Actinomycetota</taxon>
        <taxon>Actinomycetes</taxon>
        <taxon>Mycobacteriales</taxon>
        <taxon>Mycobacteriaceae</taxon>
        <taxon>Mycobacterium</taxon>
        <taxon>Mycobacterium tuberculosis complex</taxon>
    </lineage>
</organism>
<proteinExistence type="inferred from homology"/>
<evidence type="ECO:0000256" key="1">
    <source>
        <dbReference type="SAM" id="MobiDB-lite"/>
    </source>
</evidence>
<evidence type="ECO:0000305" key="2"/>
<accession>P9WFL0</accession>
<accession>L0T5E6</accession>
<accession>P71573</accession>
<accession>Q50791</accession>
<reference key="1">
    <citation type="journal article" date="2002" name="J. Bacteriol.">
        <title>Whole-genome comparison of Mycobacterium tuberculosis clinical and laboratory strains.</title>
        <authorList>
            <person name="Fleischmann R.D."/>
            <person name="Alland D."/>
            <person name="Eisen J.A."/>
            <person name="Carpenter L."/>
            <person name="White O."/>
            <person name="Peterson J.D."/>
            <person name="DeBoy R.T."/>
            <person name="Dodson R.J."/>
            <person name="Gwinn M.L."/>
            <person name="Haft D.H."/>
            <person name="Hickey E.K."/>
            <person name="Kolonay J.F."/>
            <person name="Nelson W.C."/>
            <person name="Umayam L.A."/>
            <person name="Ermolaeva M.D."/>
            <person name="Salzberg S.L."/>
            <person name="Delcher A."/>
            <person name="Utterback T.R."/>
            <person name="Weidman J.F."/>
            <person name="Khouri H.M."/>
            <person name="Gill J."/>
            <person name="Mikula A."/>
            <person name="Bishai W."/>
            <person name="Jacobs W.R. Jr."/>
            <person name="Venter J.C."/>
            <person name="Fraser C.M."/>
        </authorList>
    </citation>
    <scope>NUCLEOTIDE SEQUENCE [LARGE SCALE GENOMIC DNA]</scope>
    <source>
        <strain>CDC 1551 / Oshkosh</strain>
    </source>
</reference>
<name>Y004_MYCTO</name>